<organism>
    <name type="scientific">Rickettsia bellii (strain RML369-C)</name>
    <dbReference type="NCBI Taxonomy" id="336407"/>
    <lineage>
        <taxon>Bacteria</taxon>
        <taxon>Pseudomonadati</taxon>
        <taxon>Pseudomonadota</taxon>
        <taxon>Alphaproteobacteria</taxon>
        <taxon>Rickettsiales</taxon>
        <taxon>Rickettsiaceae</taxon>
        <taxon>Rickettsieae</taxon>
        <taxon>Rickettsia</taxon>
        <taxon>belli group</taxon>
    </lineage>
</organism>
<protein>
    <recommendedName>
        <fullName>Uncharacterized protein RBE_1263</fullName>
    </recommendedName>
</protein>
<proteinExistence type="inferred from homology"/>
<sequence length="955" mass="104888">MQSSLIKILGVLAIVATLVCFVFAALGMIGAVSVGNGCYMRYAPGGKGGSDSITSTITLNANANYVNTSTMLPDGTMQLTPDPAHYGEWLNTQVEVKDKQAVSLQVVGQISLCLAYVPKDNLQFTESTRPGKSNLDDNGKMIPIPRVTDVNKPPLSLIMDAKNNEWRNITEMYANDRILVSVTPNYSPGAGGTVGAMDAFKGTNVTADCSQGKTAYDPICGRYSIYSGPYVNACELKQNYWQGNKKQKCPNGCVWGTIDWCYTAPSAWCTYYYVCDSLSAWVNNYGTMPEPYKDDGTFTFSWASNSGGIFIDYANLQCSNNINIPPNGKCPDSVDDRSPKDKDYIGGAGCTSGVCNGGEFQSQRRFWYTSDGNGGKGPTGLIWQISNTSNVDSTLPSTLQFAQFVTASDQPTEYGNEYKVIYNIPFNSNTDKGYLQYRLWCPTSQDASKNTGGYVMNIKQTKCYRENGNSLTDVFNNRGQVQYLVVPSAENPNTSGKNYSPEAAIVDSKGKANFNAAGEGYIWMRVLNDPNDYKDSEGSYKVHFSTSQSVGSFTIKVMNPLLQLFKGKVKGAAESIFRNIVCYGGDTSSCTNFFNYIKALLILYVMVYGAMFLLGFAKINQKDLVVRIVKIGIVSGLMNGNTFEFFNNYLFDTIANFSDEIISNMSGYSLFNSNGTVSNPFMFLDAVMSRILFSQTFMAQLLALLSLGLSGIIYFIITVIAVMIVIITAFRAAAVYIMAFMATCILIGIAPIFISFLLFDFTRYLFDNWVRFTIRYMIEPVVLMAGIIVLTQLFTIYLDFVLGYSVCWKCALPIKIPFIGTILPVALLNVPIFCINWFAPWGMDYMSGMMGVNMQNIVALVIIAYGMYGYVEFSGNMVARLTSAAGPSATSMGGAMSGAAEQGALSQVGMDEKTRKGITGRAKERLKQRNETLKQAEKTRKNAPKEEPPKAEIPK</sequence>
<accession>Q1RH20</accession>
<comment type="subcellular location">
    <subcellularLocation>
        <location evidence="3">Cell membrane</location>
        <topology evidence="3">Multi-pass membrane protein</topology>
    </subcellularLocation>
</comment>
<comment type="similarity">
    <text evidence="3">Belongs to the TrbL/VirB6 family.</text>
</comment>
<keyword id="KW-1003">Cell membrane</keyword>
<keyword id="KW-0472">Membrane</keyword>
<keyword id="KW-0732">Signal</keyword>
<keyword id="KW-0812">Transmembrane</keyword>
<keyword id="KW-1133">Transmembrane helix</keyword>
<feature type="signal peptide" evidence="1">
    <location>
        <begin position="1"/>
        <end position="24"/>
    </location>
</feature>
<feature type="chain" id="PRO_0000269212" description="Uncharacterized protein RBE_1263">
    <location>
        <begin position="25"/>
        <end position="955"/>
    </location>
</feature>
<feature type="transmembrane region" description="Helical" evidence="1">
    <location>
        <begin position="597"/>
        <end position="617"/>
    </location>
</feature>
<feature type="transmembrane region" description="Helical" evidence="1">
    <location>
        <begin position="707"/>
        <end position="727"/>
    </location>
</feature>
<feature type="transmembrane region" description="Helical" evidence="1">
    <location>
        <begin position="739"/>
        <end position="759"/>
    </location>
</feature>
<feature type="transmembrane region" description="Helical" evidence="1">
    <location>
        <begin position="781"/>
        <end position="801"/>
    </location>
</feature>
<feature type="transmembrane region" description="Helical" evidence="1">
    <location>
        <begin position="818"/>
        <end position="838"/>
    </location>
</feature>
<feature type="transmembrane region" description="Helical" evidence="1">
    <location>
        <begin position="857"/>
        <end position="877"/>
    </location>
</feature>
<feature type="region of interest" description="Disordered" evidence="2">
    <location>
        <begin position="127"/>
        <end position="146"/>
    </location>
</feature>
<feature type="region of interest" description="Disordered" evidence="2">
    <location>
        <begin position="905"/>
        <end position="955"/>
    </location>
</feature>
<feature type="compositionally biased region" description="Basic and acidic residues" evidence="2">
    <location>
        <begin position="910"/>
        <end position="955"/>
    </location>
</feature>
<reference key="1">
    <citation type="journal article" date="2006" name="PLoS Genet.">
        <title>Genome sequence of Rickettsia bellii illuminates the role of amoebae in gene exchanges between intracellular pathogens.</title>
        <authorList>
            <person name="Ogata H."/>
            <person name="La Scola B."/>
            <person name="Audic S."/>
            <person name="Renesto P."/>
            <person name="Blanc G."/>
            <person name="Robert C."/>
            <person name="Fournier P.-E."/>
            <person name="Claverie J.-M."/>
            <person name="Raoult D."/>
        </authorList>
    </citation>
    <scope>NUCLEOTIDE SEQUENCE [LARGE SCALE GENOMIC DNA]</scope>
    <source>
        <strain>RML369-C</strain>
    </source>
</reference>
<evidence type="ECO:0000255" key="1"/>
<evidence type="ECO:0000256" key="2">
    <source>
        <dbReference type="SAM" id="MobiDB-lite"/>
    </source>
</evidence>
<evidence type="ECO:0000305" key="3"/>
<gene>
    <name type="ordered locus">RBE_1263</name>
</gene>
<name>Y1263_RICBR</name>
<dbReference type="EMBL" id="CP000087">
    <property type="protein sequence ID" value="ABE05344.1"/>
    <property type="molecule type" value="Genomic_DNA"/>
</dbReference>
<dbReference type="RefSeq" id="WP_011477916.1">
    <property type="nucleotide sequence ID" value="NC_007940.1"/>
</dbReference>
<dbReference type="SMR" id="Q1RH20"/>
<dbReference type="KEGG" id="rbe:RBE_1263"/>
<dbReference type="eggNOG" id="COG3704">
    <property type="taxonomic scope" value="Bacteria"/>
</dbReference>
<dbReference type="HOGENOM" id="CLU_304399_0_0_5"/>
<dbReference type="OrthoDB" id="7160583at2"/>
<dbReference type="Proteomes" id="UP000001951">
    <property type="component" value="Chromosome"/>
</dbReference>
<dbReference type="GO" id="GO:0005886">
    <property type="term" value="C:plasma membrane"/>
    <property type="evidence" value="ECO:0007669"/>
    <property type="project" value="UniProtKB-SubCell"/>
</dbReference>
<dbReference type="GO" id="GO:0030255">
    <property type="term" value="P:protein secretion by the type IV secretion system"/>
    <property type="evidence" value="ECO:0007669"/>
    <property type="project" value="InterPro"/>
</dbReference>
<dbReference type="InterPro" id="IPR007688">
    <property type="entry name" value="Conjugal_tfr_TrbL/VirB6"/>
</dbReference>
<dbReference type="Pfam" id="PF04610">
    <property type="entry name" value="TrbL"/>
    <property type="match status" value="1"/>
</dbReference>